<dbReference type="EC" id="3.4.22.-"/>
<dbReference type="EMBL" id="AF074612">
    <property type="protein sequence ID" value="AAC69833.1"/>
    <property type="molecule type" value="Genomic_DNA"/>
</dbReference>
<dbReference type="EMBL" id="AF053946">
    <property type="protein sequence ID" value="AAC62582.1"/>
    <property type="molecule type" value="Genomic_DNA"/>
</dbReference>
<dbReference type="EMBL" id="AL117189">
    <property type="protein sequence ID" value="CAB54897.1"/>
    <property type="molecule type" value="Genomic_DNA"/>
</dbReference>
<dbReference type="EMBL" id="AE017043">
    <property type="protein sequence ID" value="AAS58582.1"/>
    <property type="molecule type" value="Genomic_DNA"/>
</dbReference>
<dbReference type="PIR" id="T43601">
    <property type="entry name" value="T43601"/>
</dbReference>
<dbReference type="RefSeq" id="NP_395155.1">
    <property type="nucleotide sequence ID" value="NC_003131.1"/>
</dbReference>
<dbReference type="RefSeq" id="NP_857758.1">
    <property type="nucleotide sequence ID" value="NC_004836.1"/>
</dbReference>
<dbReference type="RefSeq" id="NP_857958.1">
    <property type="nucleotide sequence ID" value="NC_004839.1"/>
</dbReference>
<dbReference type="RefSeq" id="WP_002213006.1">
    <property type="nucleotide sequence ID" value="NZ_WUCM01000119.1"/>
</dbReference>
<dbReference type="SMR" id="O68703"/>
<dbReference type="IntAct" id="O68703">
    <property type="interactions" value="1"/>
</dbReference>
<dbReference type="MINT" id="O68703"/>
<dbReference type="MEROPS" id="C58.001"/>
<dbReference type="PaxDb" id="214092-5832441"/>
<dbReference type="DNASU" id="1149322"/>
<dbReference type="EnsemblBacteria" id="AAS58582">
    <property type="protein sequence ID" value="AAS58582"/>
    <property type="gene ID" value="YP_pCD67"/>
</dbReference>
<dbReference type="KEGG" id="ype:YPCD1.20"/>
<dbReference type="KEGG" id="ypm:YP_pCD67"/>
<dbReference type="PATRIC" id="fig|214092.21.peg.24"/>
<dbReference type="eggNOG" id="COG3177">
    <property type="taxonomic scope" value="Bacteria"/>
</dbReference>
<dbReference type="HOGENOM" id="CLU_073575_0_0_6"/>
<dbReference type="OMA" id="QSTMTEY"/>
<dbReference type="OrthoDB" id="6852685at2"/>
<dbReference type="Proteomes" id="UP000000815">
    <property type="component" value="Plasmid pCD1"/>
</dbReference>
<dbReference type="Proteomes" id="UP000001019">
    <property type="component" value="Plasmid pCD1"/>
</dbReference>
<dbReference type="GO" id="GO:0005576">
    <property type="term" value="C:extracellular region"/>
    <property type="evidence" value="ECO:0007669"/>
    <property type="project" value="UniProtKB-SubCell"/>
</dbReference>
<dbReference type="GO" id="GO:0004197">
    <property type="term" value="F:cysteine-type endopeptidase activity"/>
    <property type="evidence" value="ECO:0007669"/>
    <property type="project" value="InterPro"/>
</dbReference>
<dbReference type="GO" id="GO:0006508">
    <property type="term" value="P:proteolysis"/>
    <property type="evidence" value="ECO:0007669"/>
    <property type="project" value="UniProtKB-KW"/>
</dbReference>
<dbReference type="GO" id="GO:0141030">
    <property type="term" value="P:symbiont-mediated perturbation of host actin cytoskeleton via filamentous actin depolymerization"/>
    <property type="evidence" value="ECO:0000269"/>
    <property type="project" value="SigSci"/>
</dbReference>
<dbReference type="CDD" id="cd20498">
    <property type="entry name" value="C58_YopT"/>
    <property type="match status" value="1"/>
</dbReference>
<dbReference type="Gene3D" id="3.90.70.20">
    <property type="match status" value="1"/>
</dbReference>
<dbReference type="InterPro" id="IPR038765">
    <property type="entry name" value="Papain-like_cys_pep_sf"/>
</dbReference>
<dbReference type="InterPro" id="IPR003951">
    <property type="entry name" value="Peptidase_C58"/>
</dbReference>
<dbReference type="InterPro" id="IPR006473">
    <property type="entry name" value="Peptidase_C58_Yopt"/>
</dbReference>
<dbReference type="NCBIfam" id="TIGR01586">
    <property type="entry name" value="yopT_cys_prot"/>
    <property type="match status" value="1"/>
</dbReference>
<dbReference type="Pfam" id="PF03543">
    <property type="entry name" value="Peptidase_C58"/>
    <property type="match status" value="1"/>
</dbReference>
<dbReference type="PRINTS" id="PR01376">
    <property type="entry name" value="BACSURFANTGN"/>
</dbReference>
<dbReference type="SUPFAM" id="SSF54001">
    <property type="entry name" value="Cysteine proteinases"/>
    <property type="match status" value="1"/>
</dbReference>
<reference key="1">
    <citation type="journal article" date="1998" name="Infect. Immun.">
        <title>DNA sequencing and analysis of the low-Ca2+-response plasmid pCD1 of Yersinia pestis KIM5.</title>
        <authorList>
            <person name="Perry R.D."/>
            <person name="Straley S.C."/>
            <person name="Fetherston J.D."/>
            <person name="Rose D.J."/>
            <person name="Gregor J."/>
            <person name="Blattner F.R."/>
        </authorList>
    </citation>
    <scope>NUCLEOTIDE SEQUENCE [GENOMIC DNA]</scope>
    <source>
        <strain>KIM5 / Biovar Mediaevalis</strain>
    </source>
</reference>
<reference key="2">
    <citation type="journal article" date="1998" name="J. Bacteriol.">
        <title>Structural organization of virulence-associated plasmids of Yersinia pestis.</title>
        <authorList>
            <person name="Hu P."/>
            <person name="Elliott J."/>
            <person name="McCready P."/>
            <person name="Skowronski E."/>
            <person name="Garnes J."/>
            <person name="Kobayashi A."/>
            <person name="Brubaker R.R."/>
            <person name="Garcia E."/>
        </authorList>
    </citation>
    <scope>NUCLEOTIDE SEQUENCE [GENOMIC DNA]</scope>
    <source>
        <strain>KIM5 / Biovar Mediaevalis</strain>
    </source>
</reference>
<reference key="3">
    <citation type="journal article" date="2001" name="Nature">
        <title>Genome sequence of Yersinia pestis, the causative agent of plague.</title>
        <authorList>
            <person name="Parkhill J."/>
            <person name="Wren B.W."/>
            <person name="Thomson N.R."/>
            <person name="Titball R.W."/>
            <person name="Holden M.T.G."/>
            <person name="Prentice M.B."/>
            <person name="Sebaihia M."/>
            <person name="James K.D."/>
            <person name="Churcher C.M."/>
            <person name="Mungall K.L."/>
            <person name="Baker S."/>
            <person name="Basham D."/>
            <person name="Bentley S.D."/>
            <person name="Brooks K."/>
            <person name="Cerdeno-Tarraga A.-M."/>
            <person name="Chillingworth T."/>
            <person name="Cronin A."/>
            <person name="Davies R.M."/>
            <person name="Davis P."/>
            <person name="Dougan G."/>
            <person name="Feltwell T."/>
            <person name="Hamlin N."/>
            <person name="Holroyd S."/>
            <person name="Jagels K."/>
            <person name="Karlyshev A.V."/>
            <person name="Leather S."/>
            <person name="Moule S."/>
            <person name="Oyston P.C.F."/>
            <person name="Quail M.A."/>
            <person name="Rutherford K.M."/>
            <person name="Simmonds M."/>
            <person name="Skelton J."/>
            <person name="Stevens K."/>
            <person name="Whitehead S."/>
            <person name="Barrell B.G."/>
        </authorList>
    </citation>
    <scope>NUCLEOTIDE SEQUENCE [LARGE SCALE GENOMIC DNA]</scope>
    <source>
        <strain>CO-92 / Biovar Orientalis</strain>
    </source>
</reference>
<reference key="4">
    <citation type="journal article" date="2004" name="DNA Res.">
        <title>Complete genome sequence of Yersinia pestis strain 91001, an isolate avirulent to humans.</title>
        <authorList>
            <person name="Song Y."/>
            <person name="Tong Z."/>
            <person name="Wang J."/>
            <person name="Wang L."/>
            <person name="Guo Z."/>
            <person name="Han Y."/>
            <person name="Zhang J."/>
            <person name="Pei D."/>
            <person name="Zhou D."/>
            <person name="Qin H."/>
            <person name="Pang X."/>
            <person name="Han Y."/>
            <person name="Zhai J."/>
            <person name="Li M."/>
            <person name="Cui B."/>
            <person name="Qi Z."/>
            <person name="Jin L."/>
            <person name="Dai R."/>
            <person name="Chen F."/>
            <person name="Li S."/>
            <person name="Ye C."/>
            <person name="Du Z."/>
            <person name="Lin W."/>
            <person name="Wang J."/>
            <person name="Yu J."/>
            <person name="Yang H."/>
            <person name="Wang J."/>
            <person name="Huang P."/>
            <person name="Yang R."/>
        </authorList>
    </citation>
    <scope>NUCLEOTIDE SEQUENCE [LARGE SCALE GENOMIC DNA]</scope>
    <source>
        <strain>91001 / Biovar Mediaevalis</strain>
    </source>
</reference>
<reference key="5">
    <citation type="journal article" date="2002" name="Cell">
        <title>A Yersinia effector and a Pseudomonas avirulence protein define a family of cysteine proteases functioning in bacterial pathogenesis.</title>
        <authorList>
            <person name="Shao F."/>
            <person name="Merritt P.M."/>
            <person name="Bao Z."/>
            <person name="Innes R.W."/>
            <person name="Dixon J.E."/>
        </authorList>
    </citation>
    <scope>ENZYME ACTIVITY</scope>
    <scope>FUNCTION</scope>
    <scope>INTERACTION WITH HUMAN ARHA</scope>
    <scope>MUTAGENESIS OF CYS-139; TRP-146; ARG-165; HIS-258; ASP-274; GLU-279 AND SER-300</scope>
</reference>
<feature type="chain" id="PRO_0000192513" description="Cysteine protease YopT">
    <location>
        <begin position="1"/>
        <end position="322"/>
    </location>
</feature>
<feature type="active site">
    <location>
        <position position="139"/>
    </location>
</feature>
<feature type="active site">
    <location>
        <position position="258"/>
    </location>
</feature>
<feature type="active site">
    <location>
        <position position="274"/>
    </location>
</feature>
<feature type="mutagenesis site" description="Loss of function; abolishes the cleavage of ARHA." evidence="1">
    <original>C</original>
    <variation>S</variation>
    <location>
        <position position="139"/>
    </location>
</feature>
<feature type="mutagenesis site" description="Abolishes cytotoxicity." evidence="1">
    <original>W</original>
    <variation>A</variation>
    <location>
        <position position="146"/>
    </location>
</feature>
<feature type="mutagenesis site" description="No effect." evidence="1">
    <original>R</original>
    <variation>A</variation>
    <location>
        <position position="165"/>
    </location>
</feature>
<feature type="mutagenesis site" description="Loss of function; abolishes the cleavage of ARHA." evidence="1">
    <original>H</original>
    <variation>A</variation>
    <location>
        <position position="258"/>
    </location>
</feature>
<feature type="mutagenesis site" description="Loss of function; abolishes the cleavage of ARHA." evidence="1">
    <original>D</original>
    <variation>A</variation>
    <location>
        <position position="274"/>
    </location>
</feature>
<feature type="mutagenesis site" description="No effect." evidence="1">
    <original>E</original>
    <variation>A</variation>
    <location>
        <position position="279"/>
    </location>
</feature>
<feature type="mutagenesis site" description="No effect." evidence="1">
    <original>S</original>
    <variation>A</variation>
    <location>
        <position position="300"/>
    </location>
</feature>
<organism>
    <name type="scientific">Yersinia pestis</name>
    <dbReference type="NCBI Taxonomy" id="632"/>
    <lineage>
        <taxon>Bacteria</taxon>
        <taxon>Pseudomonadati</taxon>
        <taxon>Pseudomonadota</taxon>
        <taxon>Gammaproteobacteria</taxon>
        <taxon>Enterobacterales</taxon>
        <taxon>Yersiniaceae</taxon>
        <taxon>Yersinia</taxon>
    </lineage>
</organism>
<name>YOPT_YERPE</name>
<comment type="function">
    <text evidence="1">Cysteine protease, which is translocated into infected cells and plays a central role in pathogenesis by cleaving the C-terminus end of the human small GTPase RhoA/ARHA, a regulator of cytoskeleton. Once cleaved, ARHA loses its lipid modification, and is released from the cell membrane, leading to the subsequent disruption of actin cytoskeleton of the host cell.</text>
</comment>
<comment type="subunit">
    <text evidence="1">Interacts with human ARHA.</text>
</comment>
<comment type="subcellular location">
    <subcellularLocation>
        <location>Secreted</location>
    </subcellularLocation>
    <text>In infected cells, it is cytoplasmic. Translocated into the host cell by the type III secretion apparatus with the help of the SycT chaperone.</text>
</comment>
<comment type="similarity">
    <text evidence="2">Belongs to the peptidase C58 family.</text>
</comment>
<geneLocation type="plasmid">
    <name>pCD1</name>
</geneLocation>
<proteinExistence type="evidence at protein level"/>
<evidence type="ECO:0000269" key="1">
    <source>
    </source>
</evidence>
<evidence type="ECO:0000305" key="2"/>
<protein>
    <recommendedName>
        <fullName>Cysteine protease YopT</fullName>
        <ecNumber>3.4.22.-</ecNumber>
    </recommendedName>
</protein>
<keyword id="KW-0378">Hydrolase</keyword>
<keyword id="KW-0614">Plasmid</keyword>
<keyword id="KW-0645">Protease</keyword>
<keyword id="KW-1185">Reference proteome</keyword>
<keyword id="KW-0964">Secreted</keyword>
<keyword id="KW-0788">Thiol protease</keyword>
<keyword id="KW-0843">Virulence</keyword>
<sequence>MNSIHGHYHIQLSNYSAGENLQSATLTEGVIGAHRVKVETALSHSNLQKKLSATIKHNQSGRSMLDRKLTSDGKANQRSSFTFSMIMYRMIHFVLSTRVPAVRESVANYGGNINFKFAQTKGAFLHKIIKHSDTASGVCEALCAHWIRSHAQGQSLFDQLYVGGRKGKFQIDTLYSIKQLQIDGCKADVDQDEVTLDWFKKNGISERMIERHCLLRPVDVTGTTESEGLDQLLNAILDTHGIGYGYKKIHLSGQMSAHAIAAYVNEKSGVTFFDPNFGEFHFSDKEKFRKWFTNSFWGNSMYHYPLGVGQRFRVLTFDSKEV</sequence>
<gene>
    <name type="primary">yopT</name>
    <name type="ordered locus">YPCD1.20</name>
    <name type="ordered locus">y5059</name>
    <name type="ordered locus">y0065</name>
    <name type="ordered locus">YP_pCD67</name>
</gene>
<accession>O68703</accession>